<accession>B1JDV9</accession>
<dbReference type="EMBL" id="CP000949">
    <property type="protein sequence ID" value="ACA75220.1"/>
    <property type="molecule type" value="Genomic_DNA"/>
</dbReference>
<dbReference type="SMR" id="B1JDV9"/>
<dbReference type="STRING" id="390235.PputW619_4744"/>
<dbReference type="KEGG" id="ppw:PputW619_4744"/>
<dbReference type="eggNOG" id="COG0091">
    <property type="taxonomic scope" value="Bacteria"/>
</dbReference>
<dbReference type="HOGENOM" id="CLU_083987_3_3_6"/>
<dbReference type="OrthoDB" id="9805969at2"/>
<dbReference type="GO" id="GO:0022625">
    <property type="term" value="C:cytosolic large ribosomal subunit"/>
    <property type="evidence" value="ECO:0007669"/>
    <property type="project" value="TreeGrafter"/>
</dbReference>
<dbReference type="GO" id="GO:0019843">
    <property type="term" value="F:rRNA binding"/>
    <property type="evidence" value="ECO:0007669"/>
    <property type="project" value="UniProtKB-UniRule"/>
</dbReference>
<dbReference type="GO" id="GO:0003735">
    <property type="term" value="F:structural constituent of ribosome"/>
    <property type="evidence" value="ECO:0007669"/>
    <property type="project" value="InterPro"/>
</dbReference>
<dbReference type="GO" id="GO:0006412">
    <property type="term" value="P:translation"/>
    <property type="evidence" value="ECO:0007669"/>
    <property type="project" value="UniProtKB-UniRule"/>
</dbReference>
<dbReference type="CDD" id="cd00336">
    <property type="entry name" value="Ribosomal_L22"/>
    <property type="match status" value="1"/>
</dbReference>
<dbReference type="FunFam" id="3.90.470.10:FF:000001">
    <property type="entry name" value="50S ribosomal protein L22"/>
    <property type="match status" value="1"/>
</dbReference>
<dbReference type="Gene3D" id="3.90.470.10">
    <property type="entry name" value="Ribosomal protein L22/L17"/>
    <property type="match status" value="1"/>
</dbReference>
<dbReference type="HAMAP" id="MF_01331_B">
    <property type="entry name" value="Ribosomal_uL22_B"/>
    <property type="match status" value="1"/>
</dbReference>
<dbReference type="InterPro" id="IPR001063">
    <property type="entry name" value="Ribosomal_uL22"/>
</dbReference>
<dbReference type="InterPro" id="IPR005727">
    <property type="entry name" value="Ribosomal_uL22_bac/chlpt-type"/>
</dbReference>
<dbReference type="InterPro" id="IPR047867">
    <property type="entry name" value="Ribosomal_uL22_bac/org-type"/>
</dbReference>
<dbReference type="InterPro" id="IPR018260">
    <property type="entry name" value="Ribosomal_uL22_CS"/>
</dbReference>
<dbReference type="InterPro" id="IPR036394">
    <property type="entry name" value="Ribosomal_uL22_sf"/>
</dbReference>
<dbReference type="NCBIfam" id="TIGR01044">
    <property type="entry name" value="rplV_bact"/>
    <property type="match status" value="1"/>
</dbReference>
<dbReference type="PANTHER" id="PTHR13501">
    <property type="entry name" value="CHLOROPLAST 50S RIBOSOMAL PROTEIN L22-RELATED"/>
    <property type="match status" value="1"/>
</dbReference>
<dbReference type="PANTHER" id="PTHR13501:SF8">
    <property type="entry name" value="LARGE RIBOSOMAL SUBUNIT PROTEIN UL22M"/>
    <property type="match status" value="1"/>
</dbReference>
<dbReference type="Pfam" id="PF00237">
    <property type="entry name" value="Ribosomal_L22"/>
    <property type="match status" value="1"/>
</dbReference>
<dbReference type="SUPFAM" id="SSF54843">
    <property type="entry name" value="Ribosomal protein L22"/>
    <property type="match status" value="1"/>
</dbReference>
<dbReference type="PROSITE" id="PS00464">
    <property type="entry name" value="RIBOSOMAL_L22"/>
    <property type="match status" value="1"/>
</dbReference>
<feature type="chain" id="PRO_1000142297" description="Large ribosomal subunit protein uL22">
    <location>
        <begin position="1"/>
        <end position="110"/>
    </location>
</feature>
<keyword id="KW-0687">Ribonucleoprotein</keyword>
<keyword id="KW-0689">Ribosomal protein</keyword>
<keyword id="KW-0694">RNA-binding</keyword>
<keyword id="KW-0699">rRNA-binding</keyword>
<organism>
    <name type="scientific">Pseudomonas putida (strain W619)</name>
    <dbReference type="NCBI Taxonomy" id="390235"/>
    <lineage>
        <taxon>Bacteria</taxon>
        <taxon>Pseudomonadati</taxon>
        <taxon>Pseudomonadota</taxon>
        <taxon>Gammaproteobacteria</taxon>
        <taxon>Pseudomonadales</taxon>
        <taxon>Pseudomonadaceae</taxon>
        <taxon>Pseudomonas</taxon>
    </lineage>
</organism>
<evidence type="ECO:0000255" key="1">
    <source>
        <dbReference type="HAMAP-Rule" id="MF_01331"/>
    </source>
</evidence>
<evidence type="ECO:0000305" key="2"/>
<proteinExistence type="inferred from homology"/>
<gene>
    <name evidence="1" type="primary">rplV</name>
    <name type="ordered locus">PputW619_4744</name>
</gene>
<sequence>MEVAAKLSGARISAQKARLVADQIRGKKVGEALNLLAFSSKKAAEIMKKVLESAVANAEHNEGADVDDLKVSTVFVNEGRSLKRIMPRAKGRADRIVKRSCHITVKVADK</sequence>
<reference key="1">
    <citation type="submission" date="2008-02" db="EMBL/GenBank/DDBJ databases">
        <title>Complete sequence of Pseudomonas putida W619.</title>
        <authorList>
            <person name="Copeland A."/>
            <person name="Lucas S."/>
            <person name="Lapidus A."/>
            <person name="Barry K."/>
            <person name="Detter J.C."/>
            <person name="Glavina del Rio T."/>
            <person name="Dalin E."/>
            <person name="Tice H."/>
            <person name="Pitluck S."/>
            <person name="Chain P."/>
            <person name="Malfatti S."/>
            <person name="Shin M."/>
            <person name="Vergez L."/>
            <person name="Schmutz J."/>
            <person name="Larimer F."/>
            <person name="Land M."/>
            <person name="Hauser L."/>
            <person name="Kyrpides N."/>
            <person name="Kim E."/>
            <person name="Taghavi S."/>
            <person name="Vangronsveld D."/>
            <person name="van der Lelie D."/>
            <person name="Richardson P."/>
        </authorList>
    </citation>
    <scope>NUCLEOTIDE SEQUENCE [LARGE SCALE GENOMIC DNA]</scope>
    <source>
        <strain>W619</strain>
    </source>
</reference>
<protein>
    <recommendedName>
        <fullName evidence="1">Large ribosomal subunit protein uL22</fullName>
    </recommendedName>
    <alternativeName>
        <fullName evidence="2">50S ribosomal protein L22</fullName>
    </alternativeName>
</protein>
<comment type="function">
    <text evidence="1">This protein binds specifically to 23S rRNA; its binding is stimulated by other ribosomal proteins, e.g. L4, L17, and L20. It is important during the early stages of 50S assembly. It makes multiple contacts with different domains of the 23S rRNA in the assembled 50S subunit and ribosome (By similarity).</text>
</comment>
<comment type="function">
    <text evidence="1">The globular domain of the protein is located near the polypeptide exit tunnel on the outside of the subunit, while an extended beta-hairpin is found that lines the wall of the exit tunnel in the center of the 70S ribosome.</text>
</comment>
<comment type="subunit">
    <text evidence="1">Part of the 50S ribosomal subunit.</text>
</comment>
<comment type="similarity">
    <text evidence="1">Belongs to the universal ribosomal protein uL22 family.</text>
</comment>
<name>RL22_PSEPW</name>